<name>TRXB_SPIBA</name>
<comment type="catalytic activity">
    <reaction>
        <text>[thioredoxin]-dithiol + NADP(+) = [thioredoxin]-disulfide + NADPH + H(+)</text>
        <dbReference type="Rhea" id="RHEA:20345"/>
        <dbReference type="Rhea" id="RHEA-COMP:10698"/>
        <dbReference type="Rhea" id="RHEA-COMP:10700"/>
        <dbReference type="ChEBI" id="CHEBI:15378"/>
        <dbReference type="ChEBI" id="CHEBI:29950"/>
        <dbReference type="ChEBI" id="CHEBI:50058"/>
        <dbReference type="ChEBI" id="CHEBI:57783"/>
        <dbReference type="ChEBI" id="CHEBI:58349"/>
        <dbReference type="EC" id="1.8.1.9"/>
    </reaction>
</comment>
<comment type="cofactor">
    <cofactor evidence="2">
        <name>FAD</name>
        <dbReference type="ChEBI" id="CHEBI:57692"/>
    </cofactor>
    <text evidence="2">Binds 1 FAD per subunit.</text>
</comment>
<comment type="subunit">
    <text evidence="2">Homodimer.</text>
</comment>
<comment type="subcellular location">
    <subcellularLocation>
        <location evidence="1">Cytoplasm</location>
    </subcellularLocation>
</comment>
<comment type="miscellaneous">
    <text>The active site is a redox-active disulfide bond.</text>
</comment>
<comment type="similarity">
    <text evidence="3">Belongs to the class-II pyridine nucleotide-disulfide oxidoreductase family.</text>
</comment>
<accession>Q8T6Z1</accession>
<protein>
    <recommendedName>
        <fullName>Thioredoxin reductase</fullName>
        <ecNumber>1.8.1.9</ecNumber>
    </recommendedName>
    <alternativeName>
        <fullName>L-TrxR</fullName>
    </alternativeName>
</protein>
<gene>
    <name type="primary">TRXB</name>
</gene>
<organism>
    <name type="scientific">Spironucleus barkhanus</name>
    <dbReference type="NCBI Taxonomy" id="103874"/>
    <lineage>
        <taxon>Eukaryota</taxon>
        <taxon>Metamonada</taxon>
        <taxon>Diplomonadida</taxon>
        <taxon>Hexamitidae</taxon>
        <taxon>Hexamitinae</taxon>
        <taxon>Spironucleus</taxon>
    </lineage>
</organism>
<keyword id="KW-0963">Cytoplasm</keyword>
<keyword id="KW-1015">Disulfide bond</keyword>
<keyword id="KW-0274">FAD</keyword>
<keyword id="KW-0285">Flavoprotein</keyword>
<keyword id="KW-0521">NADP</keyword>
<keyword id="KW-0560">Oxidoreductase</keyword>
<keyword id="KW-0676">Redox-active center</keyword>
<proteinExistence type="evidence at transcript level"/>
<evidence type="ECO:0000250" key="1"/>
<evidence type="ECO:0000250" key="2">
    <source>
        <dbReference type="UniProtKB" id="P0A9P4"/>
    </source>
</evidence>
<evidence type="ECO:0000305" key="3"/>
<reference key="1">
    <citation type="journal article" date="2002" name="Trends Parasitol.">
        <title>The diversity and evolution of thioredoxin reductase: new perspectives.</title>
        <authorList>
            <person name="Hirt R.P."/>
            <person name="Mueller S."/>
            <person name="Embley T.M."/>
            <person name="Coombs G.H."/>
        </authorList>
    </citation>
    <scope>NUCLEOTIDE SEQUENCE [MRNA]</scope>
</reference>
<dbReference type="EC" id="1.8.1.9"/>
<dbReference type="EMBL" id="AF394238">
    <property type="protein sequence ID" value="AAM00424.1"/>
    <property type="molecule type" value="mRNA"/>
</dbReference>
<dbReference type="SMR" id="Q8T6Z1"/>
<dbReference type="GO" id="GO:0005737">
    <property type="term" value="C:cytoplasm"/>
    <property type="evidence" value="ECO:0007669"/>
    <property type="project" value="UniProtKB-SubCell"/>
</dbReference>
<dbReference type="GO" id="GO:0004791">
    <property type="term" value="F:thioredoxin-disulfide reductase (NADPH) activity"/>
    <property type="evidence" value="ECO:0007669"/>
    <property type="project" value="UniProtKB-EC"/>
</dbReference>
<dbReference type="GO" id="GO:0019430">
    <property type="term" value="P:removal of superoxide radicals"/>
    <property type="evidence" value="ECO:0007669"/>
    <property type="project" value="InterPro"/>
</dbReference>
<dbReference type="Gene3D" id="3.50.50.60">
    <property type="entry name" value="FAD/NAD(P)-binding domain"/>
    <property type="match status" value="2"/>
</dbReference>
<dbReference type="InterPro" id="IPR036188">
    <property type="entry name" value="FAD/NAD-bd_sf"/>
</dbReference>
<dbReference type="InterPro" id="IPR023753">
    <property type="entry name" value="FAD/NAD-binding_dom"/>
</dbReference>
<dbReference type="InterPro" id="IPR050097">
    <property type="entry name" value="Ferredoxin-NADP_redctase_2"/>
</dbReference>
<dbReference type="InterPro" id="IPR008255">
    <property type="entry name" value="Pyr_nucl-diS_OxRdtase_2_AS"/>
</dbReference>
<dbReference type="InterPro" id="IPR005982">
    <property type="entry name" value="Thioredox_Rdtase"/>
</dbReference>
<dbReference type="NCBIfam" id="TIGR01292">
    <property type="entry name" value="TRX_reduct"/>
    <property type="match status" value="1"/>
</dbReference>
<dbReference type="PANTHER" id="PTHR48105">
    <property type="entry name" value="THIOREDOXIN REDUCTASE 1-RELATED-RELATED"/>
    <property type="match status" value="1"/>
</dbReference>
<dbReference type="Pfam" id="PF07992">
    <property type="entry name" value="Pyr_redox_2"/>
    <property type="match status" value="1"/>
</dbReference>
<dbReference type="PRINTS" id="PR00368">
    <property type="entry name" value="FADPNR"/>
</dbReference>
<dbReference type="PRINTS" id="PR00469">
    <property type="entry name" value="PNDRDTASEII"/>
</dbReference>
<dbReference type="SUPFAM" id="SSF51905">
    <property type="entry name" value="FAD/NAD(P)-binding domain"/>
    <property type="match status" value="1"/>
</dbReference>
<dbReference type="PROSITE" id="PS00573">
    <property type="entry name" value="PYRIDINE_REDOX_2"/>
    <property type="match status" value="1"/>
</dbReference>
<feature type="chain" id="PRO_0000166760" description="Thioredoxin reductase">
    <location>
        <begin position="1" status="less than"/>
        <end position="305"/>
    </location>
</feature>
<feature type="binding site" evidence="2">
    <location>
        <begin position="28"/>
        <end position="35"/>
    </location>
    <ligand>
        <name>FAD</name>
        <dbReference type="ChEBI" id="CHEBI:57692"/>
    </ligand>
</feature>
<feature type="binding site" evidence="2">
    <location>
        <begin position="272"/>
        <end position="281"/>
    </location>
    <ligand>
        <name>FAD</name>
        <dbReference type="ChEBI" id="CHEBI:57692"/>
    </ligand>
</feature>
<feature type="disulfide bond" description="Redox-active" evidence="2">
    <location>
        <begin position="129"/>
        <end position="132"/>
    </location>
</feature>
<feature type="non-terminal residue">
    <location>
        <position position="1"/>
    </location>
</feature>
<sequence length="305" mass="32907">LVIVGGGPGGLAAAIYAGRAGLTPVIFLGIETSSQLMTTTEVENYPGFKTIQGPDLVQNQVDQAEHCGAQLFYEDVTKIDATARPFKITHGYENEIMTCDALIFATGSTAQRLDVIGEKQFWQKGVSACAVCDSMMAKNKDTVVVGGGDVACEEASYLSNIASKVYLILRRDAFRASAAMVQRVKSNPKIEIIYNSAVQEIKGETRVNQILVKNLKSGDITPLKVEALFWCIGHTPQTRLLKGQVKMSENGYILVENQTQYTNVPGIFAAGDCCDWIYRQAIVAAGSGCKAALDAERWLASNGGH</sequence>